<keyword id="KW-1015">Disulfide bond</keyword>
<keyword id="KW-1170">Fusion of virus membrane with host endosomal membrane</keyword>
<keyword id="KW-1168">Fusion of virus membrane with host membrane</keyword>
<keyword id="KW-0325">Glycoprotein</keyword>
<keyword id="KW-1032">Host cell membrane</keyword>
<keyword id="KW-1038">Host endoplasmic reticulum</keyword>
<keyword id="KW-1040">Host Golgi apparatus</keyword>
<keyword id="KW-1043">Host membrane</keyword>
<keyword id="KW-0945">Host-virus interaction</keyword>
<keyword id="KW-0449">Lipoprotein</keyword>
<keyword id="KW-0472">Membrane</keyword>
<keyword id="KW-0479">Metal-binding</keyword>
<keyword id="KW-0519">Myristate</keyword>
<keyword id="KW-0812">Transmembrane</keyword>
<keyword id="KW-1133">Transmembrane helix</keyword>
<keyword id="KW-1161">Viral attachment to host cell</keyword>
<keyword id="KW-0261">Viral envelope protein</keyword>
<keyword id="KW-1162">Viral penetration into host cytoplasm</keyword>
<keyword id="KW-0946">Virion</keyword>
<keyword id="KW-1164">Virus endocytosis by host</keyword>
<keyword id="KW-1160">Virus entry into host cell</keyword>
<keyword id="KW-0862">Zinc</keyword>
<proteinExistence type="inferred from homology"/>
<feature type="initiator methionine" description="Removed; by host" evidence="2">
    <location>
        <position position="1"/>
    </location>
</feature>
<feature type="chain" id="PRO_0000353852" description="Pre-glycoprotein polyprotein GP complex" evidence="2">
    <location>
        <begin position="2"/>
        <end position="490"/>
    </location>
</feature>
<feature type="chain" id="PRO_0000353853" description="Stable signal peptide" evidence="2">
    <location>
        <begin position="2"/>
        <end position="58"/>
    </location>
</feature>
<feature type="chain" id="PRO_0000036599" description="Glycoprotein G1" evidence="2">
    <location>
        <begin position="59"/>
        <end position="258"/>
    </location>
</feature>
<feature type="chain" id="PRO_0000036600" description="Glycoprotein G2" evidence="2">
    <location>
        <begin position="259"/>
        <end position="490"/>
    </location>
</feature>
<feature type="topological domain" description="Extracellular" evidence="2">
    <location>
        <begin position="2"/>
        <end position="17"/>
    </location>
</feature>
<feature type="transmembrane region" description="Helical" evidence="2">
    <location>
        <begin position="18"/>
        <end position="33"/>
    </location>
</feature>
<feature type="topological domain" description="Cytoplasmic" evidence="2">
    <location>
        <begin position="34"/>
        <end position="58"/>
    </location>
</feature>
<feature type="topological domain" description="Extracellular" evidence="2">
    <location>
        <begin position="59"/>
        <end position="431"/>
    </location>
</feature>
<feature type="transmembrane region" description="Helical" evidence="2">
    <location>
        <begin position="432"/>
        <end position="452"/>
    </location>
</feature>
<feature type="topological domain" description="Cytoplasmic" evidence="2">
    <location>
        <begin position="453"/>
        <end position="490"/>
    </location>
</feature>
<feature type="binding site" evidence="2">
    <location>
        <position position="57"/>
    </location>
    <ligand>
        <name>Zn(2+)</name>
        <dbReference type="ChEBI" id="CHEBI:29105"/>
        <label>1</label>
    </ligand>
</feature>
<feature type="binding site" evidence="2">
    <location>
        <position position="454"/>
    </location>
    <ligand>
        <name>Zn(2+)</name>
        <dbReference type="ChEBI" id="CHEBI:29105"/>
        <label>2</label>
    </ligand>
</feature>
<feature type="binding site" evidence="2">
    <location>
        <position position="456"/>
    </location>
    <ligand>
        <name>Zn(2+)</name>
        <dbReference type="ChEBI" id="CHEBI:29105"/>
        <label>2</label>
    </ligand>
</feature>
<feature type="binding site" evidence="2">
    <location>
        <position position="462"/>
    </location>
    <ligand>
        <name>Zn(2+)</name>
        <dbReference type="ChEBI" id="CHEBI:29105"/>
        <label>2</label>
    </ligand>
</feature>
<feature type="binding site" evidence="2">
    <location>
        <position position="466"/>
    </location>
    <ligand>
        <name>Zn(2+)</name>
        <dbReference type="ChEBI" id="CHEBI:29105"/>
        <label>1</label>
    </ligand>
</feature>
<feature type="binding site" evidence="2">
    <location>
        <position position="474"/>
    </location>
    <ligand>
        <name>Zn(2+)</name>
        <dbReference type="ChEBI" id="CHEBI:29105"/>
        <label>1</label>
    </ligand>
</feature>
<feature type="binding site" evidence="2">
    <location>
        <position position="476"/>
    </location>
    <ligand>
        <name>Zn(2+)</name>
        <dbReference type="ChEBI" id="CHEBI:29105"/>
        <label>1</label>
    </ligand>
</feature>
<feature type="site" description="Important for GP-C-mediated membrane fusion" evidence="1">
    <location>
        <position position="33"/>
    </location>
</feature>
<feature type="site" description="Cleavage; by host signal peptidase" evidence="2">
    <location>
        <begin position="58"/>
        <end position="59"/>
    </location>
</feature>
<feature type="site" description="Cleavage; by host MBTPS1" evidence="2">
    <location>
        <begin position="258"/>
        <end position="259"/>
    </location>
</feature>
<feature type="lipid moiety-binding region" description="N-myristoyl glycine; by host" evidence="2">
    <location>
        <position position="2"/>
    </location>
</feature>
<feature type="glycosylation site" description="N-linked (GlcNAc...) asparagine; by host" evidence="2">
    <location>
        <position position="78"/>
    </location>
</feature>
<feature type="glycosylation site" description="N-linked (GlcNAc...) asparagine; by host" evidence="2">
    <location>
        <position position="88"/>
    </location>
</feature>
<feature type="glycosylation site" description="N-linked (GlcNAc...) asparagine; by host" evidence="2">
    <location>
        <position position="98"/>
    </location>
</feature>
<feature type="glycosylation site" description="N-linked (GlcNAc...) asparagine; by host" evidence="2">
    <location>
        <position position="108"/>
    </location>
</feature>
<feature type="glycosylation site" description="N-linked (GlcNAc...) asparagine; by host" evidence="2">
    <location>
        <position position="118"/>
    </location>
</feature>
<feature type="glycosylation site" description="N-linked (GlcNAc...) asparagine; by host" evidence="2">
    <location>
        <position position="166"/>
    </location>
</feature>
<feature type="glycosylation site" description="N-linked (GlcNAc...) asparagine; by host" evidence="2">
    <location>
        <position position="223"/>
    </location>
</feature>
<feature type="glycosylation site" description="N-linked (GlcNAc...) asparagine; by host" evidence="2">
    <location>
        <position position="364"/>
    </location>
</feature>
<feature type="glycosylation site" description="N-linked (GlcNAc...) asparagine; by host" evidence="2">
    <location>
        <position position="372"/>
    </location>
</feature>
<feature type="glycosylation site" description="N-linked (GlcNAc...) asparagine; by host" evidence="2">
    <location>
        <position position="389"/>
    </location>
</feature>
<feature type="glycosylation site" description="N-linked (GlcNAc...) asparagine; by host" evidence="2">
    <location>
        <position position="394"/>
    </location>
</feature>
<feature type="disulfide bond" evidence="2">
    <location>
        <begin position="85"/>
        <end position="230"/>
    </location>
</feature>
<feature type="disulfide bond" evidence="2">
    <location>
        <begin position="117"/>
        <end position="154"/>
    </location>
</feature>
<feature type="disulfide bond" evidence="2">
    <location>
        <begin position="179"/>
        <end position="211"/>
    </location>
</feature>
<feature type="disulfide bond" evidence="2">
    <location>
        <begin position="278"/>
        <end position="291"/>
    </location>
</feature>
<feature type="disulfide bond" evidence="2">
    <location>
        <begin position="300"/>
        <end position="309"/>
    </location>
</feature>
<feature type="disulfide bond" evidence="2">
    <location>
        <begin position="363"/>
        <end position="384"/>
    </location>
</feature>
<reference key="1">
    <citation type="journal article" date="1991" name="Virus Res.">
        <title>Nucleotide sequence of the S RNA of Lassa virus (Nigerian strain) and comparative analysis of arenavirus gene products.</title>
        <authorList>
            <person name="Clegg J.C.S."/>
            <person name="Wilson S.M."/>
            <person name="Oram J.D."/>
        </authorList>
    </citation>
    <scope>NUCLEOTIDE SEQUENCE [GENOMIC RNA]</scope>
</reference>
<comment type="function">
    <molecule>Stable signal peptide</molecule>
    <text evidence="2">Functions as a cleaved signal peptide that is retained as the third component of the GP complex (GP-C). Helps to stabilize the spike complex in its native conformation. The SSP is required for efficient glycoprotein expression, post-translational maturation cleavage of G1 and G2, glycoprotein transport to the cell surface plasma membrane, formation of infectious virus particles, and acid pH-dependent glycoprotein-mediated cell fusion.</text>
</comment>
<comment type="function">
    <molecule>Glycoprotein G1</molecule>
    <text evidence="2">Forms the virion spikes together with glycoprotein G2. The glycoprotein spike trimers are connected to the underlying matrix. Interacts with the host receptor. Mediates virus attachment to the host primary receptor alpha-dystroglycan DAG1 (alpha-DG) at the cell surface. This attachment induces virion internalization apparently through macropinocytosis. Following endocytosis, there is a pH-dependent switch from binding DAG1 to the host lysosomal receptor LAMP1. This latter binding triggers the dissociation of GP1, exposing the fusion subunit, GP2, such that fusion can occur. Down-modulates host DAG1.</text>
</comment>
<comment type="function">
    <molecule>Glycoprotein G2</molecule>
    <text evidence="2">Forms the virion spikes together with glycoprotein G1. The glycoprotein spike trimers are connected to the underlying matrix. Class I viral fusion protein that directs fusion of viral and host endosomal membranes, leading to delivery of the nucleocapsid into the cytoplasm. Membrane fusion is mediated by irreversible conformational changes induced by acidification.</text>
</comment>
<comment type="subunit">
    <molecule>Stable signal peptide</molecule>
    <text evidence="2">Interacts with glycoprotein G2. Part of the GP complex (GP-C) together with glycoprotein G1 and glycoprotein G2. The GP-complex interacts with protein Z, which interacts with ribonucleocapsid; these interactions may induce virion budding.</text>
</comment>
<comment type="subunit">
    <molecule>Glycoprotein G1</molecule>
    <text evidence="2">Homotrimer; disulfide-linked. In pre-fusion state, G1 homotrimers bind G2 homotrimers via ionic interactions. Part of the GP complex (GP-C) together with glycoprotein G2 and the stable signal peptide. Interacts with the primary host receptor DAG1 on the cell surface; this interaction occurs at pH 8.0 but not at pH 6.0 and below. Upon virus internalization and at endosomal pH, interacts with the host lysosomal protein LAMP1; this interaction mediates G1 dissociation from GP-C and membrane fusion. The GP-complex interacts with protein Z, which interacts with ribonucleocapsid; these interactions may induce virion budding.</text>
</comment>
<comment type="subunit">
    <molecule>Glycoprotein G2</molecule>
    <text evidence="2">Homotrimer. Interacts with the stable signal peptide. In pre-fusion state, G2 homotrimers bind G1 homotrimers via ionic interactions. Part of the GP complex (GP-C) together with glycoprotein G1 and the stable signal peptide. Acidification in the endosome triggers rearrangements, which ultimately leads to a 6 helix bundle formed by the two heptad repeat domains (HR1 and HR2) in post-fusion state. The GP-complex interacts with protein Z, which interacts with ribonucleocapsid; these interactions may induce virion budding.</text>
</comment>
<comment type="subcellular location">
    <molecule>Stable signal peptide</molecule>
    <subcellularLocation>
        <location evidence="2">Virion membrane</location>
        <topology evidence="2">Single-pass type II membrane protein</topology>
    </subcellularLocation>
    <subcellularLocation>
        <location evidence="2">Host endoplasmic reticulum membrane</location>
        <topology evidence="2">Single-pass type II membrane protein</topology>
    </subcellularLocation>
    <subcellularLocation>
        <location evidence="2">Host Golgi apparatus membrane</location>
        <topology evidence="2">Single-pass type II membrane protein</topology>
    </subcellularLocation>
    <subcellularLocation>
        <location evidence="2">Host cell membrane</location>
        <topology evidence="2">Single-pass type II membrane protein</topology>
    </subcellularLocation>
</comment>
<comment type="subcellular location">
    <molecule>Glycoprotein G1</molecule>
    <subcellularLocation>
        <location evidence="2">Virion membrane</location>
        <topology evidence="2">Peripheral membrane protein</topology>
    </subcellularLocation>
    <subcellularLocation>
        <location evidence="2">Host endoplasmic reticulum membrane</location>
        <topology evidence="2">Peripheral membrane protein</topology>
    </subcellularLocation>
    <subcellularLocation>
        <location evidence="2">Host Golgi apparatus membrane</location>
        <topology evidence="2">Peripheral membrane protein</topology>
    </subcellularLocation>
    <subcellularLocation>
        <location evidence="2">Host cell membrane</location>
        <topology evidence="2">Peripheral membrane protein</topology>
    </subcellularLocation>
</comment>
<comment type="subcellular location">
    <molecule>Glycoprotein G2</molecule>
    <subcellularLocation>
        <location evidence="2">Virion membrane</location>
        <topology evidence="2">Single-pass membrane protein</topology>
    </subcellularLocation>
    <subcellularLocation>
        <location evidence="2">Host endoplasmic reticulum membrane</location>
        <topology evidence="2">Single-pass membrane protein</topology>
    </subcellularLocation>
    <subcellularLocation>
        <location evidence="2">Host Golgi apparatus membrane</location>
        <topology evidence="2">Single-pass membrane protein</topology>
    </subcellularLocation>
    <subcellularLocation>
        <location evidence="2">Host cell membrane</location>
        <topology evidence="2">Single-pass membrane protein</topology>
    </subcellularLocation>
    <text evidence="2">Binding to the stable signal peptide masks endogenous ER localization signals in the cytoplasmic domain of G2 to ensure that only the fully assembled, tripartite GP complex is transported for virion assembly.</text>
</comment>
<comment type="domain">
    <molecule>Stable signal peptide</molecule>
    <text evidence="2">The N-terminus is localized at the extracellular side of the GP-C, with a part embedded in the membrane probably.</text>
</comment>
<comment type="domain">
    <molecule>Glycoprotein G1</molecule>
    <text evidence="2">Upon protonation in a weak acidic environment, the histidine triad involved in host LAMP1 binding inhibits pre-mature triggering of the spike, an inhibition that LAMP1 overrides.</text>
</comment>
<comment type="domain">
    <molecule>Glycoprotein G2</molecule>
    <text evidence="2">Contains 1 fusion peptide at the N-terminus, 2 heptad repeats domains HR1 and HR2 and, at the C-terminus, a cytoplasmic domain that plays a role in ER location. Also contains a zinc-binding domain that allows SSP retention in the GPC complex by accepting a cysteine from SSP as the fourth ligand.</text>
</comment>
<comment type="PTM">
    <molecule>Pre-glycoprotein polyprotein GP complex</molecule>
    <text evidence="2">Specific enzymatic cleavages in vivo yield mature proteins. GP-C polyprotein is cleaved in the endoplasmic reticulum by the host protease MBTPS1. Only cleaved glycoprotein is incorporated into virions.</text>
</comment>
<comment type="PTM">
    <molecule>Stable signal peptide</molecule>
    <text evidence="2">The SSP remains stably associated with the GP complex following cleavage by signal peptidase and plays crucial roles in the trafficking of GP through the secretory pathway.</text>
</comment>
<comment type="PTM">
    <molecule>Stable signal peptide</molecule>
    <text evidence="2">Myristoylation is necessary for GP2-mediated fusion activity.</text>
</comment>
<comment type="similarity">
    <text evidence="2">Belongs to the arenaviridae GPC protein family.</text>
</comment>
<accession>P17332</accession>
<protein>
    <recommendedName>
        <fullName evidence="2">Pre-glycoprotein polyprotein GP complex</fullName>
        <shortName evidence="2">Pre-GP-C</shortName>
    </recommendedName>
    <component>
        <recommendedName>
            <fullName evidence="2">Stable signal peptide</fullName>
            <shortName evidence="2">SSP</shortName>
        </recommendedName>
    </component>
    <component>
        <recommendedName>
            <fullName evidence="2">Glycoprotein G1</fullName>
            <shortName evidence="2">GP1</shortName>
        </recommendedName>
    </component>
    <component>
        <recommendedName>
            <fullName evidence="2">Glycoprotein G2</fullName>
            <shortName evidence="2">GP2</shortName>
        </recommendedName>
    </component>
</protein>
<gene>
    <name evidence="2" type="primary">GPC</name>
    <name type="synonym">GP-C</name>
</gene>
<organism>
    <name type="scientific">Lassa virus (strain GA391)</name>
    <name type="common">LASV</name>
    <dbReference type="NCBI Taxonomy" id="11621"/>
    <lineage>
        <taxon>Viruses</taxon>
        <taxon>Riboviria</taxon>
        <taxon>Orthornavirae</taxon>
        <taxon>Negarnaviricota</taxon>
        <taxon>Polyploviricotina</taxon>
        <taxon>Ellioviricetes</taxon>
        <taxon>Bunyavirales</taxon>
        <taxon>Arenaviridae</taxon>
        <taxon>Mammarenavirus</taxon>
        <taxon>Mammarenavirus lassaense</taxon>
    </lineage>
</organism>
<sequence>MGQIVTFFQEVPHVIEEVMNIVLIALSILAILKGLYNVATCGLIGLVTFLLLSGRSCSLIYKGTYELQTLELNMETLNMTMPLSCTKNNSHHYIRVGNETGLELTLTNTSILNHKFCNLSDAHKRNLYDHSLMSIISTFHLSIPNFNQYEAMSCDFNGGKITVQYNLSHSFAVDAAGHCGTLANGVLQTFMRMAWGGSYIALDSGRGNWDCIMTSYQYLIIQNTTWDDHCQFSRPSPIGYLGLLSQRTRDIYISRRLLGTFTWTLSDSEGNETPGGYCLTRWMLIEAELKCFGNTAVAKCNEKHDEEFCDMLRLFDFNKQAIRRLKTEAQMSIQLINKAVNALINDQLIMKNHLRDIMGIPYCNYSRYWYLNHTSTGKTSLPRCWLISNGSYLNETKFSDDIEQQADNMITEMLQKEYIDRQGKTPLGLVDLFVFSTSFYLISIFLHLVKIPTHRHIVGKPCPKPHRLNHMGICSCGLYKQPGVPVRWKR</sequence>
<dbReference type="EMBL" id="X52400">
    <property type="protein sequence ID" value="CAA36645.1"/>
    <property type="molecule type" value="Genomic_RNA"/>
</dbReference>
<dbReference type="PIR" id="A43492">
    <property type="entry name" value="A43492"/>
</dbReference>
<dbReference type="SMR" id="P17332"/>
<dbReference type="GlyCosmos" id="P17332">
    <property type="glycosylation" value="11 sites, No reported glycans"/>
</dbReference>
<dbReference type="GO" id="GO:0044167">
    <property type="term" value="C:host cell endoplasmic reticulum membrane"/>
    <property type="evidence" value="ECO:0007669"/>
    <property type="project" value="UniProtKB-SubCell"/>
</dbReference>
<dbReference type="GO" id="GO:0044178">
    <property type="term" value="C:host cell Golgi membrane"/>
    <property type="evidence" value="ECO:0007669"/>
    <property type="project" value="UniProtKB-SubCell"/>
</dbReference>
<dbReference type="GO" id="GO:0020002">
    <property type="term" value="C:host cell plasma membrane"/>
    <property type="evidence" value="ECO:0007669"/>
    <property type="project" value="UniProtKB-SubCell"/>
</dbReference>
<dbReference type="GO" id="GO:0016020">
    <property type="term" value="C:membrane"/>
    <property type="evidence" value="ECO:0007669"/>
    <property type="project" value="UniProtKB-UniRule"/>
</dbReference>
<dbReference type="GO" id="GO:0019031">
    <property type="term" value="C:viral envelope"/>
    <property type="evidence" value="ECO:0007669"/>
    <property type="project" value="UniProtKB-UniRule"/>
</dbReference>
<dbReference type="GO" id="GO:0055036">
    <property type="term" value="C:virion membrane"/>
    <property type="evidence" value="ECO:0007669"/>
    <property type="project" value="UniProtKB-SubCell"/>
</dbReference>
<dbReference type="GO" id="GO:0046872">
    <property type="term" value="F:metal ion binding"/>
    <property type="evidence" value="ECO:0007669"/>
    <property type="project" value="UniProtKB-KW"/>
</dbReference>
<dbReference type="GO" id="GO:0039654">
    <property type="term" value="P:fusion of virus membrane with host endosome membrane"/>
    <property type="evidence" value="ECO:0007669"/>
    <property type="project" value="UniProtKB-UniRule"/>
</dbReference>
<dbReference type="GO" id="GO:0019065">
    <property type="term" value="P:receptor-mediated endocytosis of virus by host cell"/>
    <property type="evidence" value="ECO:0007669"/>
    <property type="project" value="UniProtKB-UniRule"/>
</dbReference>
<dbReference type="GO" id="GO:0019062">
    <property type="term" value="P:virion attachment to host cell"/>
    <property type="evidence" value="ECO:0007669"/>
    <property type="project" value="UniProtKB-UniRule"/>
</dbReference>
<dbReference type="Gene3D" id="6.10.140.1590">
    <property type="match status" value="1"/>
</dbReference>
<dbReference type="Gene3D" id="2.20.28.180">
    <property type="entry name" value="Arenavirus glycoprotein, zinc binding domain"/>
    <property type="match status" value="1"/>
</dbReference>
<dbReference type="HAMAP" id="MF_04084">
    <property type="entry name" value="ARENA_GPC"/>
    <property type="match status" value="1"/>
</dbReference>
<dbReference type="InterPro" id="IPR001535">
    <property type="entry name" value="Arena_glycoprot"/>
</dbReference>
<dbReference type="InterPro" id="IPR043015">
    <property type="entry name" value="Arena_glycoprot_zinc-bd"/>
</dbReference>
<dbReference type="Pfam" id="PF00798">
    <property type="entry name" value="Arena_glycoprot"/>
    <property type="match status" value="1"/>
</dbReference>
<dbReference type="PIRSF" id="PIRSF004028">
    <property type="entry name" value="GPC_ArenaV"/>
    <property type="match status" value="1"/>
</dbReference>
<name>GLYC_LASSG</name>
<evidence type="ECO:0000250" key="1">
    <source>
        <dbReference type="UniProtKB" id="P26313"/>
    </source>
</evidence>
<evidence type="ECO:0000255" key="2">
    <source>
        <dbReference type="HAMAP-Rule" id="MF_04084"/>
    </source>
</evidence>
<organismHost>
    <name type="scientific">Homo sapiens</name>
    <name type="common">Human</name>
    <dbReference type="NCBI Taxonomy" id="9606"/>
</organismHost>
<organismHost>
    <name type="scientific">Mastomys natalensis</name>
    <name type="common">African soft-furred rat</name>
    <name type="synonym">Praomys natalensis</name>
    <dbReference type="NCBI Taxonomy" id="10112"/>
</organismHost>